<protein>
    <recommendedName>
        <fullName evidence="1">Phosphoribosyl-AMP cyclohydrolase</fullName>
        <shortName evidence="1">PRA-CH</shortName>
        <ecNumber evidence="1">3.5.4.19</ecNumber>
    </recommendedName>
</protein>
<reference key="1">
    <citation type="journal article" date="2002" name="J. Mol. Microbiol. Biotechnol.">
        <title>The genome of Methanosarcina mazei: evidence for lateral gene transfer between Bacteria and Archaea.</title>
        <authorList>
            <person name="Deppenmeier U."/>
            <person name="Johann A."/>
            <person name="Hartsch T."/>
            <person name="Merkl R."/>
            <person name="Schmitz R.A."/>
            <person name="Martinez-Arias R."/>
            <person name="Henne A."/>
            <person name="Wiezer A."/>
            <person name="Baeumer S."/>
            <person name="Jacobi C."/>
            <person name="Brueggemann H."/>
            <person name="Lienard T."/>
            <person name="Christmann A."/>
            <person name="Boemecke M."/>
            <person name="Steckel S."/>
            <person name="Bhattacharyya A."/>
            <person name="Lykidis A."/>
            <person name="Overbeek R."/>
            <person name="Klenk H.-P."/>
            <person name="Gunsalus R.P."/>
            <person name="Fritz H.-J."/>
            <person name="Gottschalk G."/>
        </authorList>
    </citation>
    <scope>NUCLEOTIDE SEQUENCE [LARGE SCALE GENOMIC DNA]</scope>
    <source>
        <strain>ATCC BAA-159 / DSM 3647 / Goe1 / Go1 / JCM 11833 / OCM 88</strain>
    </source>
</reference>
<dbReference type="EC" id="3.5.4.19" evidence="1"/>
<dbReference type="EMBL" id="AE008384">
    <property type="protein sequence ID" value="AAM31715.1"/>
    <property type="molecule type" value="Genomic_DNA"/>
</dbReference>
<dbReference type="RefSeq" id="WP_011033951.1">
    <property type="nucleotide sequence ID" value="NC_003901.1"/>
</dbReference>
<dbReference type="SMR" id="Q8PVE6"/>
<dbReference type="GeneID" id="82161075"/>
<dbReference type="KEGG" id="mma:MM_2019"/>
<dbReference type="PATRIC" id="fig|192952.21.peg.2321"/>
<dbReference type="eggNOG" id="arCOG02676">
    <property type="taxonomic scope" value="Archaea"/>
</dbReference>
<dbReference type="HOGENOM" id="CLU_048577_5_3_2"/>
<dbReference type="UniPathway" id="UPA00031">
    <property type="reaction ID" value="UER00008"/>
</dbReference>
<dbReference type="Proteomes" id="UP000000595">
    <property type="component" value="Chromosome"/>
</dbReference>
<dbReference type="GO" id="GO:0005737">
    <property type="term" value="C:cytoplasm"/>
    <property type="evidence" value="ECO:0007669"/>
    <property type="project" value="UniProtKB-SubCell"/>
</dbReference>
<dbReference type="GO" id="GO:0000287">
    <property type="term" value="F:magnesium ion binding"/>
    <property type="evidence" value="ECO:0007669"/>
    <property type="project" value="UniProtKB-UniRule"/>
</dbReference>
<dbReference type="GO" id="GO:0004635">
    <property type="term" value="F:phosphoribosyl-AMP cyclohydrolase activity"/>
    <property type="evidence" value="ECO:0007669"/>
    <property type="project" value="UniProtKB-UniRule"/>
</dbReference>
<dbReference type="GO" id="GO:0008270">
    <property type="term" value="F:zinc ion binding"/>
    <property type="evidence" value="ECO:0007669"/>
    <property type="project" value="UniProtKB-UniRule"/>
</dbReference>
<dbReference type="GO" id="GO:0000105">
    <property type="term" value="P:L-histidine biosynthetic process"/>
    <property type="evidence" value="ECO:0007669"/>
    <property type="project" value="UniProtKB-UniRule"/>
</dbReference>
<dbReference type="FunFam" id="3.10.20.810:FF:000001">
    <property type="entry name" value="Histidine biosynthesis bifunctional protein HisIE"/>
    <property type="match status" value="1"/>
</dbReference>
<dbReference type="Gene3D" id="4.10.80.70">
    <property type="match status" value="1"/>
</dbReference>
<dbReference type="Gene3D" id="3.10.20.810">
    <property type="entry name" value="Phosphoribosyl-AMP cyclohydrolase"/>
    <property type="match status" value="1"/>
</dbReference>
<dbReference type="HAMAP" id="MF_01021">
    <property type="entry name" value="HisI"/>
    <property type="match status" value="1"/>
</dbReference>
<dbReference type="InterPro" id="IPR026660">
    <property type="entry name" value="PRA-CH"/>
</dbReference>
<dbReference type="InterPro" id="IPR002496">
    <property type="entry name" value="PRib_AMP_CycHydrolase_dom"/>
</dbReference>
<dbReference type="InterPro" id="IPR038019">
    <property type="entry name" value="PRib_AMP_CycHydrolase_sf"/>
</dbReference>
<dbReference type="NCBIfam" id="NF000768">
    <property type="entry name" value="PRK00051.1"/>
    <property type="match status" value="1"/>
</dbReference>
<dbReference type="PANTHER" id="PTHR42945">
    <property type="entry name" value="HISTIDINE BIOSYNTHESIS BIFUNCTIONAL PROTEIN"/>
    <property type="match status" value="1"/>
</dbReference>
<dbReference type="PANTHER" id="PTHR42945:SF1">
    <property type="entry name" value="HISTIDINE BIOSYNTHESIS BIFUNCTIONAL PROTEIN HIS7"/>
    <property type="match status" value="1"/>
</dbReference>
<dbReference type="Pfam" id="PF01502">
    <property type="entry name" value="PRA-CH"/>
    <property type="match status" value="1"/>
</dbReference>
<dbReference type="SUPFAM" id="SSF141734">
    <property type="entry name" value="HisI-like"/>
    <property type="match status" value="1"/>
</dbReference>
<gene>
    <name evidence="1" type="primary">hisI</name>
    <name type="ordered locus">MM_2019</name>
</gene>
<proteinExistence type="inferred from homology"/>
<sequence>MIDFGNLKYENGLIIGIVQDRASKEVLMCAYMNREALEKTVETGIAHFWSRSRQKLWKKGETSGHLQKVKEIRIDCDMDSVLLLVEQVGGACHMGYRSCFYRNLDGEVVGEKVFEPEDVY</sequence>
<evidence type="ECO:0000255" key="1">
    <source>
        <dbReference type="HAMAP-Rule" id="MF_01021"/>
    </source>
</evidence>
<keyword id="KW-0028">Amino-acid biosynthesis</keyword>
<keyword id="KW-0963">Cytoplasm</keyword>
<keyword id="KW-0368">Histidine biosynthesis</keyword>
<keyword id="KW-0378">Hydrolase</keyword>
<keyword id="KW-0460">Magnesium</keyword>
<keyword id="KW-0479">Metal-binding</keyword>
<keyword id="KW-0862">Zinc</keyword>
<feature type="chain" id="PRO_0000136509" description="Phosphoribosyl-AMP cyclohydrolase">
    <location>
        <begin position="1"/>
        <end position="120"/>
    </location>
</feature>
<feature type="binding site" evidence="1">
    <location>
        <position position="75"/>
    </location>
    <ligand>
        <name>Mg(2+)</name>
        <dbReference type="ChEBI" id="CHEBI:18420"/>
    </ligand>
</feature>
<feature type="binding site" evidence="1">
    <location>
        <position position="76"/>
    </location>
    <ligand>
        <name>Zn(2+)</name>
        <dbReference type="ChEBI" id="CHEBI:29105"/>
        <note>ligand shared between dimeric partners</note>
    </ligand>
</feature>
<feature type="binding site" evidence="1">
    <location>
        <position position="77"/>
    </location>
    <ligand>
        <name>Mg(2+)</name>
        <dbReference type="ChEBI" id="CHEBI:18420"/>
    </ligand>
</feature>
<feature type="binding site" evidence="1">
    <location>
        <position position="79"/>
    </location>
    <ligand>
        <name>Mg(2+)</name>
        <dbReference type="ChEBI" id="CHEBI:18420"/>
    </ligand>
</feature>
<feature type="binding site" evidence="1">
    <location>
        <position position="92"/>
    </location>
    <ligand>
        <name>Zn(2+)</name>
        <dbReference type="ChEBI" id="CHEBI:29105"/>
        <note>ligand shared between dimeric partners</note>
    </ligand>
</feature>
<feature type="binding site" evidence="1">
    <location>
        <position position="99"/>
    </location>
    <ligand>
        <name>Zn(2+)</name>
        <dbReference type="ChEBI" id="CHEBI:29105"/>
        <note>ligand shared between dimeric partners</note>
    </ligand>
</feature>
<comment type="function">
    <text evidence="1">Catalyzes the hydrolysis of the adenine ring of phosphoribosyl-AMP.</text>
</comment>
<comment type="catalytic activity">
    <reaction evidence="1">
        <text>1-(5-phospho-beta-D-ribosyl)-5'-AMP + H2O = 1-(5-phospho-beta-D-ribosyl)-5-[(5-phospho-beta-D-ribosylamino)methylideneamino]imidazole-4-carboxamide</text>
        <dbReference type="Rhea" id="RHEA:20049"/>
        <dbReference type="ChEBI" id="CHEBI:15377"/>
        <dbReference type="ChEBI" id="CHEBI:58435"/>
        <dbReference type="ChEBI" id="CHEBI:59457"/>
        <dbReference type="EC" id="3.5.4.19"/>
    </reaction>
</comment>
<comment type="cofactor">
    <cofactor evidence="1">
        <name>Mg(2+)</name>
        <dbReference type="ChEBI" id="CHEBI:18420"/>
    </cofactor>
    <text evidence="1">Binds 1 Mg(2+) ion per subunit.</text>
</comment>
<comment type="cofactor">
    <cofactor evidence="1">
        <name>Zn(2+)</name>
        <dbReference type="ChEBI" id="CHEBI:29105"/>
    </cofactor>
    <text evidence="1">Binds 1 zinc ion per subunit.</text>
</comment>
<comment type="pathway">
    <text evidence="1">Amino-acid biosynthesis; L-histidine biosynthesis; L-histidine from 5-phospho-alpha-D-ribose 1-diphosphate: step 3/9.</text>
</comment>
<comment type="subunit">
    <text evidence="1">Homodimer.</text>
</comment>
<comment type="subcellular location">
    <subcellularLocation>
        <location evidence="1">Cytoplasm</location>
    </subcellularLocation>
</comment>
<comment type="similarity">
    <text evidence="1">Belongs to the PRA-CH family.</text>
</comment>
<organism>
    <name type="scientific">Methanosarcina mazei (strain ATCC BAA-159 / DSM 3647 / Goe1 / Go1 / JCM 11833 / OCM 88)</name>
    <name type="common">Methanosarcina frisia</name>
    <dbReference type="NCBI Taxonomy" id="192952"/>
    <lineage>
        <taxon>Archaea</taxon>
        <taxon>Methanobacteriati</taxon>
        <taxon>Methanobacteriota</taxon>
        <taxon>Stenosarchaea group</taxon>
        <taxon>Methanomicrobia</taxon>
        <taxon>Methanosarcinales</taxon>
        <taxon>Methanosarcinaceae</taxon>
        <taxon>Methanosarcina</taxon>
    </lineage>
</organism>
<accession>Q8PVE6</accession>
<name>HIS3_METMA</name>